<comment type="function">
    <text evidence="1">Type IV dipeptidyl-peptidase which removes N-terminal dipeptides sequentially from polypeptides having unsubstituted N-termini provided that the penultimate residue is proline.</text>
</comment>
<comment type="catalytic activity">
    <reaction>
        <text>Release of an N-terminal dipeptide, Xaa-Yaa-|-Zaa-, from a polypeptide, preferentially when Yaa is Pro, provided Zaa is neither Pro nor hydroxyproline.</text>
        <dbReference type="EC" id="3.4.14.5"/>
    </reaction>
</comment>
<comment type="subcellular location">
    <subcellularLocation>
        <location evidence="1">Vacuole membrane</location>
        <topology evidence="1">Single-pass type II membrane protein</topology>
    </subcellularLocation>
    <text evidence="1">Lysosome-like vacuoles.</text>
</comment>
<comment type="similarity">
    <text evidence="4">Belongs to the peptidase S9B family.</text>
</comment>
<gene>
    <name type="primary">DAPB</name>
    <name type="ordered locus">Pa_1_8430</name>
    <name type="ORF">PODANS_1_8430</name>
</gene>
<sequence>MAPAPGMAPYSDEPTGPFHRPEHNDESTGRMSHESESSVSTTSIVFDRIEERLAAKEGHFELDDHDPMKEADDDDNDLETGRFLGGRSSTQEEDFPAKNDGMNRGMRRTLIIVAGLLISAWVVGLFFYVSHKSYKPASQIEHDPQATVVQGTGKQVTLDQVMGSYWRAESHSISWIESPDGEDGLLLLKDGPGKDFLVVEDVRTQNSAGVNAAVDVASSRTLIKERHFDFGGQTHTPGRVWPSKDLKKVLIATNLEANWRHSFYASYWVFDVDMQIAEPLIPGEPNVRVQLAQWSPTSDAIAYVRDNNLFLRSLKHDKVVQITKDGGAEVFNGVPDWVYEEEVFSGNSATWWSEDGNYIAYLRTNETGVPEYPVQYFLSRPSGTEPAPGEESYPEVRQIKYPKAGAHNPVVNLKFYDVARDESFTVEISGRFADDDRLITEVVWAGGQVIVKETNRVSDVLRVVLVDVAARTGKAVRELDVKAIDGGWFEITHKTKYIPADPSKGREQDGYIDMVIHDDNDHLAYFTPLNNSEPIMLTSGHWEVVDAPSTVDLDNNIVYFVATKESSIQRHVYQVDLSGNNLKAVTDTGSEGYYDISFSAGTGYALLSYRGPNIPWQKVISTPANAHKYEHMVEENKELAKSAREYELPIKIYGTIKVDGVELNYVERRPPHFDKNKKYPVLFQQYSGPGSQSVNKRFTVDYQSYVAAGLGYVCVTVDGRGTGFIGRKNRVIIRGDLGKWEAHDQIAAAKIWASKSYVDEERLAIWGWSFGGFNTLKTLEQDGGRTFKYGMAVAPVTDWRFYDSIYTERYMLTPQTNGHGYDTSAINNVTALKQSVRFLMMHGVADDNVHMQNSLTLLDKLNMVGVENYDVHVFPDSDHGIYFHNANRIVYDKLTNWLINAFNGEWIKVANAKPQKKRSIQPILPIL</sequence>
<feature type="chain" id="PRO_0000412159" description="Probable dipeptidyl-aminopeptidase B">
    <location>
        <begin position="1"/>
        <end position="927"/>
    </location>
</feature>
<feature type="topological domain" description="Cytoplasmic" evidence="2">
    <location>
        <begin position="1"/>
        <end position="108"/>
    </location>
</feature>
<feature type="transmembrane region" description="Helical; Signal-anchor for type II membrane protein" evidence="2">
    <location>
        <begin position="109"/>
        <end position="129"/>
    </location>
</feature>
<feature type="topological domain" description="Vacuolar" evidence="2">
    <location>
        <begin position="130"/>
        <end position="927"/>
    </location>
</feature>
<feature type="region of interest" description="Disordered" evidence="3">
    <location>
        <begin position="1"/>
        <end position="44"/>
    </location>
</feature>
<feature type="region of interest" description="Disordered" evidence="3">
    <location>
        <begin position="58"/>
        <end position="101"/>
    </location>
</feature>
<feature type="compositionally biased region" description="Basic and acidic residues" evidence="3">
    <location>
        <begin position="19"/>
        <end position="36"/>
    </location>
</feature>
<feature type="compositionally biased region" description="Basic and acidic residues" evidence="3">
    <location>
        <begin position="58"/>
        <end position="70"/>
    </location>
</feature>
<feature type="active site" description="Charge relay system" evidence="1">
    <location>
        <position position="769"/>
    </location>
</feature>
<feature type="active site" description="Charge relay system" evidence="1">
    <location>
        <position position="846"/>
    </location>
</feature>
<feature type="active site" description="Charge relay system" evidence="1">
    <location>
        <position position="879"/>
    </location>
</feature>
<feature type="glycosylation site" description="N-linked (GlcNAc...) asparagine" evidence="2">
    <location>
        <position position="365"/>
    </location>
</feature>
<feature type="glycosylation site" description="N-linked (GlcNAc...) asparagine" evidence="2">
    <location>
        <position position="530"/>
    </location>
</feature>
<feature type="glycosylation site" description="N-linked (GlcNAc...) asparagine" evidence="2">
    <location>
        <position position="828"/>
    </location>
</feature>
<organism>
    <name type="scientific">Podospora anserina (strain S / ATCC MYA-4624 / DSM 980 / FGSC 10383)</name>
    <name type="common">Pleurage anserina</name>
    <dbReference type="NCBI Taxonomy" id="515849"/>
    <lineage>
        <taxon>Eukaryota</taxon>
        <taxon>Fungi</taxon>
        <taxon>Dikarya</taxon>
        <taxon>Ascomycota</taxon>
        <taxon>Pezizomycotina</taxon>
        <taxon>Sordariomycetes</taxon>
        <taxon>Sordariomycetidae</taxon>
        <taxon>Sordariales</taxon>
        <taxon>Podosporaceae</taxon>
        <taxon>Podospora</taxon>
        <taxon>Podospora anserina</taxon>
    </lineage>
</organism>
<accession>B2A951</accession>
<accession>A0A090C995</accession>
<protein>
    <recommendedName>
        <fullName>Probable dipeptidyl-aminopeptidase B</fullName>
        <shortName>DPAP B</shortName>
        <ecNumber>3.4.14.5</ecNumber>
    </recommendedName>
</protein>
<proteinExistence type="inferred from homology"/>
<reference key="1">
    <citation type="journal article" date="2008" name="Genome Biol.">
        <title>The genome sequence of the model ascomycete fungus Podospora anserina.</title>
        <authorList>
            <person name="Espagne E."/>
            <person name="Lespinet O."/>
            <person name="Malagnac F."/>
            <person name="Da Silva C."/>
            <person name="Jaillon O."/>
            <person name="Porcel B.M."/>
            <person name="Couloux A."/>
            <person name="Aury J.-M."/>
            <person name="Segurens B."/>
            <person name="Poulain J."/>
            <person name="Anthouard V."/>
            <person name="Grossetete S."/>
            <person name="Khalili H."/>
            <person name="Coppin E."/>
            <person name="Dequard-Chablat M."/>
            <person name="Picard M."/>
            <person name="Contamine V."/>
            <person name="Arnaise S."/>
            <person name="Bourdais A."/>
            <person name="Berteaux-Lecellier V."/>
            <person name="Gautheret D."/>
            <person name="de Vries R.P."/>
            <person name="Battaglia E."/>
            <person name="Coutinho P.M."/>
            <person name="Danchin E.G.J."/>
            <person name="Henrissat B."/>
            <person name="El Khoury R."/>
            <person name="Sainsard-Chanet A."/>
            <person name="Boivin A."/>
            <person name="Pinan-Lucarre B."/>
            <person name="Sellem C.H."/>
            <person name="Debuchy R."/>
            <person name="Wincker P."/>
            <person name="Weissenbach J."/>
            <person name="Silar P."/>
        </authorList>
    </citation>
    <scope>NUCLEOTIDE SEQUENCE [LARGE SCALE GENOMIC DNA]</scope>
    <source>
        <strain>S / ATCC MYA-4624 / DSM 980 / FGSC 10383</strain>
    </source>
</reference>
<reference key="2">
    <citation type="journal article" date="2014" name="Genetics">
        <title>Maintaining two mating types: Structure of the mating type locus and its role in heterokaryosis in Podospora anserina.</title>
        <authorList>
            <person name="Grognet P."/>
            <person name="Bidard F."/>
            <person name="Kuchly C."/>
            <person name="Tong L.C.H."/>
            <person name="Coppin E."/>
            <person name="Benkhali J.A."/>
            <person name="Couloux A."/>
            <person name="Wincker P."/>
            <person name="Debuchy R."/>
            <person name="Silar P."/>
        </authorList>
    </citation>
    <scope>GENOME REANNOTATION</scope>
    <source>
        <strain>S / ATCC MYA-4624 / DSM 980 / FGSC 10383</strain>
    </source>
</reference>
<dbReference type="EC" id="3.4.14.5"/>
<dbReference type="EMBL" id="CU633438">
    <property type="protein sequence ID" value="CAP60552.1"/>
    <property type="molecule type" value="Genomic_DNA"/>
</dbReference>
<dbReference type="EMBL" id="FO904936">
    <property type="protein sequence ID" value="CDP23195.1"/>
    <property type="molecule type" value="Genomic_DNA"/>
</dbReference>
<dbReference type="RefSeq" id="XP_001913070.1">
    <property type="nucleotide sequence ID" value="XM_001913035.1"/>
</dbReference>
<dbReference type="SMR" id="B2A951"/>
<dbReference type="FunCoup" id="B2A951">
    <property type="interactions" value="302"/>
</dbReference>
<dbReference type="STRING" id="515849.B2A951"/>
<dbReference type="ESTHER" id="podan-dapb">
    <property type="family name" value="DPP4N_Peptidase_S9"/>
</dbReference>
<dbReference type="GlyCosmos" id="B2A951">
    <property type="glycosylation" value="3 sites, No reported glycans"/>
</dbReference>
<dbReference type="GeneID" id="6197654"/>
<dbReference type="KEGG" id="pan:PODANSg10119"/>
<dbReference type="VEuPathDB" id="FungiDB:PODANS_1_8430"/>
<dbReference type="eggNOG" id="KOG2100">
    <property type="taxonomic scope" value="Eukaryota"/>
</dbReference>
<dbReference type="HOGENOM" id="CLU_006105_0_1_1"/>
<dbReference type="InParanoid" id="B2A951"/>
<dbReference type="OrthoDB" id="16520at2759"/>
<dbReference type="Proteomes" id="UP000001197">
    <property type="component" value="Chromosome 1"/>
</dbReference>
<dbReference type="GO" id="GO:0005886">
    <property type="term" value="C:plasma membrane"/>
    <property type="evidence" value="ECO:0007669"/>
    <property type="project" value="TreeGrafter"/>
</dbReference>
<dbReference type="GO" id="GO:0005774">
    <property type="term" value="C:vacuolar membrane"/>
    <property type="evidence" value="ECO:0007669"/>
    <property type="project" value="UniProtKB-SubCell"/>
</dbReference>
<dbReference type="GO" id="GO:0004177">
    <property type="term" value="F:aminopeptidase activity"/>
    <property type="evidence" value="ECO:0007669"/>
    <property type="project" value="UniProtKB-KW"/>
</dbReference>
<dbReference type="GO" id="GO:0008239">
    <property type="term" value="F:dipeptidyl-peptidase activity"/>
    <property type="evidence" value="ECO:0007669"/>
    <property type="project" value="UniProtKB-EC"/>
</dbReference>
<dbReference type="GO" id="GO:0008236">
    <property type="term" value="F:serine-type peptidase activity"/>
    <property type="evidence" value="ECO:0007669"/>
    <property type="project" value="UniProtKB-KW"/>
</dbReference>
<dbReference type="GO" id="GO:0006508">
    <property type="term" value="P:proteolysis"/>
    <property type="evidence" value="ECO:0007669"/>
    <property type="project" value="UniProtKB-KW"/>
</dbReference>
<dbReference type="FunFam" id="3.40.50.1820:FF:000003">
    <property type="entry name" value="Dipeptidyl peptidase 4"/>
    <property type="match status" value="1"/>
</dbReference>
<dbReference type="Gene3D" id="3.40.50.1820">
    <property type="entry name" value="alpha/beta hydrolase"/>
    <property type="match status" value="1"/>
</dbReference>
<dbReference type="Gene3D" id="2.140.10.30">
    <property type="entry name" value="Dipeptidylpeptidase IV, N-terminal domain"/>
    <property type="match status" value="1"/>
</dbReference>
<dbReference type="InterPro" id="IPR029058">
    <property type="entry name" value="AB_hydrolase_fold"/>
</dbReference>
<dbReference type="InterPro" id="IPR001375">
    <property type="entry name" value="Peptidase_S9_cat"/>
</dbReference>
<dbReference type="InterPro" id="IPR002469">
    <property type="entry name" value="Peptidase_S9B_N"/>
</dbReference>
<dbReference type="InterPro" id="IPR050278">
    <property type="entry name" value="Serine_Prot_S9B/DPPIV"/>
</dbReference>
<dbReference type="PANTHER" id="PTHR11731:SF200">
    <property type="entry name" value="DIPEPTIDYL PEPTIDASE 10, ISOFORM B"/>
    <property type="match status" value="1"/>
</dbReference>
<dbReference type="PANTHER" id="PTHR11731">
    <property type="entry name" value="PROTEASE FAMILY S9B,C DIPEPTIDYL-PEPTIDASE IV-RELATED"/>
    <property type="match status" value="1"/>
</dbReference>
<dbReference type="Pfam" id="PF00930">
    <property type="entry name" value="DPPIV_N"/>
    <property type="match status" value="1"/>
</dbReference>
<dbReference type="Pfam" id="PF00326">
    <property type="entry name" value="Peptidase_S9"/>
    <property type="match status" value="1"/>
</dbReference>
<dbReference type="SUPFAM" id="SSF53474">
    <property type="entry name" value="alpha/beta-Hydrolases"/>
    <property type="match status" value="1"/>
</dbReference>
<dbReference type="SUPFAM" id="SSF82171">
    <property type="entry name" value="DPP6 N-terminal domain-like"/>
    <property type="match status" value="1"/>
</dbReference>
<evidence type="ECO:0000250" key="1"/>
<evidence type="ECO:0000255" key="2"/>
<evidence type="ECO:0000256" key="3">
    <source>
        <dbReference type="SAM" id="MobiDB-lite"/>
    </source>
</evidence>
<evidence type="ECO:0000305" key="4"/>
<name>DAPB_PODAN</name>
<keyword id="KW-0031">Aminopeptidase</keyword>
<keyword id="KW-0325">Glycoprotein</keyword>
<keyword id="KW-0378">Hydrolase</keyword>
<keyword id="KW-0472">Membrane</keyword>
<keyword id="KW-0645">Protease</keyword>
<keyword id="KW-1185">Reference proteome</keyword>
<keyword id="KW-0720">Serine protease</keyword>
<keyword id="KW-0735">Signal-anchor</keyword>
<keyword id="KW-0812">Transmembrane</keyword>
<keyword id="KW-1133">Transmembrane helix</keyword>
<keyword id="KW-0926">Vacuole</keyword>